<name>RPOA_BUCCC</name>
<keyword id="KW-0240">DNA-directed RNA polymerase</keyword>
<keyword id="KW-0548">Nucleotidyltransferase</keyword>
<keyword id="KW-1185">Reference proteome</keyword>
<keyword id="KW-0804">Transcription</keyword>
<keyword id="KW-0808">Transferase</keyword>
<reference key="1">
    <citation type="journal article" date="2006" name="Science">
        <title>A small microbial genome: the end of a long symbiotic relationship?</title>
        <authorList>
            <person name="Perez-Brocal V."/>
            <person name="Gil R."/>
            <person name="Ramos S."/>
            <person name="Lamelas A."/>
            <person name="Postigo M."/>
            <person name="Michelena J.M."/>
            <person name="Silva F.J."/>
            <person name="Moya A."/>
            <person name="Latorre A."/>
        </authorList>
    </citation>
    <scope>NUCLEOTIDE SEQUENCE [LARGE SCALE GENOMIC DNA]</scope>
    <source>
        <strain>Cc</strain>
    </source>
</reference>
<evidence type="ECO:0000255" key="1">
    <source>
        <dbReference type="HAMAP-Rule" id="MF_00059"/>
    </source>
</evidence>
<accession>Q057C9</accession>
<dbReference type="EC" id="2.7.7.6" evidence="1"/>
<dbReference type="EMBL" id="CP000263">
    <property type="protein sequence ID" value="ABJ90770.1"/>
    <property type="molecule type" value="Genomic_DNA"/>
</dbReference>
<dbReference type="RefSeq" id="WP_011672689.1">
    <property type="nucleotide sequence ID" value="NC_008513.1"/>
</dbReference>
<dbReference type="SMR" id="Q057C9"/>
<dbReference type="STRING" id="372461.BCc_316"/>
<dbReference type="KEGG" id="bcc:BCc_316"/>
<dbReference type="eggNOG" id="COG0202">
    <property type="taxonomic scope" value="Bacteria"/>
</dbReference>
<dbReference type="HOGENOM" id="CLU_053084_0_0_6"/>
<dbReference type="OrthoDB" id="9805706at2"/>
<dbReference type="Proteomes" id="UP000000669">
    <property type="component" value="Chromosome"/>
</dbReference>
<dbReference type="GO" id="GO:0005737">
    <property type="term" value="C:cytoplasm"/>
    <property type="evidence" value="ECO:0007669"/>
    <property type="project" value="UniProtKB-ARBA"/>
</dbReference>
<dbReference type="GO" id="GO:0000428">
    <property type="term" value="C:DNA-directed RNA polymerase complex"/>
    <property type="evidence" value="ECO:0007669"/>
    <property type="project" value="UniProtKB-KW"/>
</dbReference>
<dbReference type="GO" id="GO:0003677">
    <property type="term" value="F:DNA binding"/>
    <property type="evidence" value="ECO:0007669"/>
    <property type="project" value="UniProtKB-UniRule"/>
</dbReference>
<dbReference type="GO" id="GO:0003899">
    <property type="term" value="F:DNA-directed RNA polymerase activity"/>
    <property type="evidence" value="ECO:0007669"/>
    <property type="project" value="UniProtKB-UniRule"/>
</dbReference>
<dbReference type="GO" id="GO:0046983">
    <property type="term" value="F:protein dimerization activity"/>
    <property type="evidence" value="ECO:0007669"/>
    <property type="project" value="InterPro"/>
</dbReference>
<dbReference type="GO" id="GO:0006351">
    <property type="term" value="P:DNA-templated transcription"/>
    <property type="evidence" value="ECO:0007669"/>
    <property type="project" value="UniProtKB-UniRule"/>
</dbReference>
<dbReference type="CDD" id="cd06928">
    <property type="entry name" value="RNAP_alpha_NTD"/>
    <property type="match status" value="1"/>
</dbReference>
<dbReference type="FunFam" id="1.10.150.20:FF:000001">
    <property type="entry name" value="DNA-directed RNA polymerase subunit alpha"/>
    <property type="match status" value="1"/>
</dbReference>
<dbReference type="FunFam" id="2.170.120.12:FF:000001">
    <property type="entry name" value="DNA-directed RNA polymerase subunit alpha"/>
    <property type="match status" value="1"/>
</dbReference>
<dbReference type="Gene3D" id="1.10.150.20">
    <property type="entry name" value="5' to 3' exonuclease, C-terminal subdomain"/>
    <property type="match status" value="1"/>
</dbReference>
<dbReference type="Gene3D" id="2.170.120.12">
    <property type="entry name" value="DNA-directed RNA polymerase, insert domain"/>
    <property type="match status" value="1"/>
</dbReference>
<dbReference type="Gene3D" id="3.30.1360.10">
    <property type="entry name" value="RNA polymerase, RBP11-like subunit"/>
    <property type="match status" value="1"/>
</dbReference>
<dbReference type="HAMAP" id="MF_00059">
    <property type="entry name" value="RNApol_bact_RpoA"/>
    <property type="match status" value="1"/>
</dbReference>
<dbReference type="InterPro" id="IPR011262">
    <property type="entry name" value="DNA-dir_RNA_pol_insert"/>
</dbReference>
<dbReference type="InterPro" id="IPR011263">
    <property type="entry name" value="DNA-dir_RNA_pol_RpoA/D/Rpb3"/>
</dbReference>
<dbReference type="InterPro" id="IPR011773">
    <property type="entry name" value="DNA-dir_RpoA"/>
</dbReference>
<dbReference type="InterPro" id="IPR036603">
    <property type="entry name" value="RBP11-like"/>
</dbReference>
<dbReference type="InterPro" id="IPR011260">
    <property type="entry name" value="RNAP_asu_C"/>
</dbReference>
<dbReference type="InterPro" id="IPR036643">
    <property type="entry name" value="RNApol_insert_sf"/>
</dbReference>
<dbReference type="NCBIfam" id="NF003513">
    <property type="entry name" value="PRK05182.1-2"/>
    <property type="match status" value="1"/>
</dbReference>
<dbReference type="NCBIfam" id="NF003519">
    <property type="entry name" value="PRK05182.2-5"/>
    <property type="match status" value="1"/>
</dbReference>
<dbReference type="NCBIfam" id="TIGR02027">
    <property type="entry name" value="rpoA"/>
    <property type="match status" value="1"/>
</dbReference>
<dbReference type="Pfam" id="PF01000">
    <property type="entry name" value="RNA_pol_A_bac"/>
    <property type="match status" value="1"/>
</dbReference>
<dbReference type="Pfam" id="PF03118">
    <property type="entry name" value="RNA_pol_A_CTD"/>
    <property type="match status" value="1"/>
</dbReference>
<dbReference type="Pfam" id="PF01193">
    <property type="entry name" value="RNA_pol_L"/>
    <property type="match status" value="1"/>
</dbReference>
<dbReference type="SMART" id="SM00662">
    <property type="entry name" value="RPOLD"/>
    <property type="match status" value="1"/>
</dbReference>
<dbReference type="SUPFAM" id="SSF47789">
    <property type="entry name" value="C-terminal domain of RNA polymerase alpha subunit"/>
    <property type="match status" value="1"/>
</dbReference>
<dbReference type="SUPFAM" id="SSF56553">
    <property type="entry name" value="Insert subdomain of RNA polymerase alpha subunit"/>
    <property type="match status" value="1"/>
</dbReference>
<dbReference type="SUPFAM" id="SSF55257">
    <property type="entry name" value="RBP11-like subunits of RNA polymerase"/>
    <property type="match status" value="1"/>
</dbReference>
<organism>
    <name type="scientific">Buchnera aphidicola subsp. Cinara cedri (strain Cc)</name>
    <dbReference type="NCBI Taxonomy" id="372461"/>
    <lineage>
        <taxon>Bacteria</taxon>
        <taxon>Pseudomonadati</taxon>
        <taxon>Pseudomonadota</taxon>
        <taxon>Gammaproteobacteria</taxon>
        <taxon>Enterobacterales</taxon>
        <taxon>Erwiniaceae</taxon>
        <taxon>Buchnera</taxon>
    </lineage>
</organism>
<gene>
    <name evidence="1" type="primary">rpoA</name>
    <name type="ordered locus">BCc_316</name>
</gene>
<protein>
    <recommendedName>
        <fullName evidence="1">DNA-directed RNA polymerase subunit alpha</fullName>
        <shortName evidence="1">RNAP subunit alpha</shortName>
        <ecNumber evidence="1">2.7.7.6</ecNumber>
    </recommendedName>
    <alternativeName>
        <fullName evidence="1">RNA polymerase subunit alpha</fullName>
    </alternativeName>
    <alternativeName>
        <fullName evidence="1">Transcriptase subunit alpha</fullName>
    </alternativeName>
</protein>
<feature type="chain" id="PRO_0000296787" description="DNA-directed RNA polymerase subunit alpha">
    <location>
        <begin position="1"/>
        <end position="329"/>
    </location>
</feature>
<feature type="region of interest" description="Alpha N-terminal domain (alpha-NTD)" evidence="1">
    <location>
        <begin position="1"/>
        <end position="235"/>
    </location>
</feature>
<feature type="region of interest" description="Alpha C-terminal domain (alpha-CTD)" evidence="1">
    <location>
        <begin position="249"/>
        <end position="329"/>
    </location>
</feature>
<comment type="function">
    <text evidence="1">DNA-dependent RNA polymerase catalyzes the transcription of DNA into RNA using the four ribonucleoside triphosphates as substrates.</text>
</comment>
<comment type="catalytic activity">
    <reaction evidence="1">
        <text>RNA(n) + a ribonucleoside 5'-triphosphate = RNA(n+1) + diphosphate</text>
        <dbReference type="Rhea" id="RHEA:21248"/>
        <dbReference type="Rhea" id="RHEA-COMP:14527"/>
        <dbReference type="Rhea" id="RHEA-COMP:17342"/>
        <dbReference type="ChEBI" id="CHEBI:33019"/>
        <dbReference type="ChEBI" id="CHEBI:61557"/>
        <dbReference type="ChEBI" id="CHEBI:140395"/>
        <dbReference type="EC" id="2.7.7.6"/>
    </reaction>
</comment>
<comment type="subunit">
    <text evidence="1">Homodimer. The RNAP catalytic core consists of 2 alpha, 1 beta, 1 beta' and 1 omega subunit. When a sigma factor is associated with the core the holoenzyme is formed, which can initiate transcription.</text>
</comment>
<comment type="domain">
    <text evidence="1">The N-terminal domain is essential for RNAP assembly and basal transcription, whereas the C-terminal domain is involved in interaction with transcriptional regulators and with upstream promoter elements.</text>
</comment>
<comment type="similarity">
    <text evidence="1">Belongs to the RNA polymerase alpha chain family.</text>
</comment>
<proteinExistence type="inferred from homology"/>
<sequence>MQGFVEDFLKPRLVDIQQISATHAKITLEPLERGFGHTLGNALRRILLSSISGCAVTEVEIDGILHEYMHKEGVKEDILDILLNLKGLSIKLFGKDEVTLYLKKSGIGPVLAKDINHDNSTEIINNKHIICNLTCSDASIDIRMKVTRGRGYITAKSRKENYDNEHIIGKLFLDVTYSPIERIMYTVESARVEQRTDLDKLIIEMETNGTIDPEDAIRKAATILAQQLEAFVDLRGVREPEIKEEKPEFEPVLLRPVDDLELTVRSANCLKAESIHYIGDLVQKTEVELLKTPNLGKKSLTEIKDVLASRGLSLGMKLDNWPPKSLLED</sequence>